<feature type="chain" id="PRO_0000219471" description="Transcription factor E2F5">
    <location>
        <begin position="1" status="less than"/>
        <end position="300"/>
    </location>
</feature>
<feature type="DNA-binding region" evidence="3">
    <location>
        <begin position="2"/>
        <end position="73"/>
    </location>
</feature>
<feature type="region of interest" description="Leucine-zipper">
    <location>
        <begin position="31"/>
        <end position="53"/>
    </location>
</feature>
<feature type="region of interest" description="Dimerization" evidence="3">
    <location>
        <begin position="74"/>
        <end position="170"/>
    </location>
</feature>
<feature type="region of interest" description="Disordered" evidence="4">
    <location>
        <begin position="191"/>
        <end position="250"/>
    </location>
</feature>
<feature type="region of interest" description="Transactivation" evidence="3">
    <location>
        <begin position="242"/>
        <end position="300"/>
    </location>
</feature>
<feature type="region of interest" description="RBL2 association" evidence="3">
    <location>
        <begin position="277"/>
        <end position="294"/>
    </location>
</feature>
<feature type="short sequence motif" description="DEF box">
    <location>
        <begin position="36"/>
        <end position="73"/>
    </location>
</feature>
<feature type="compositionally biased region" description="Low complexity" evidence="4">
    <location>
        <begin position="203"/>
        <end position="221"/>
    </location>
</feature>
<feature type="compositionally biased region" description="Polar residues" evidence="4">
    <location>
        <begin position="235"/>
        <end position="246"/>
    </location>
</feature>
<feature type="non-terminal residue">
    <location>
        <position position="1"/>
    </location>
</feature>
<proteinExistence type="evidence at transcript level"/>
<keyword id="KW-0010">Activator</keyword>
<keyword id="KW-0970">Cilium biogenesis/degradation</keyword>
<keyword id="KW-0238">DNA-binding</keyword>
<keyword id="KW-0539">Nucleus</keyword>
<keyword id="KW-1185">Reference proteome</keyword>
<keyword id="KW-0804">Transcription</keyword>
<keyword id="KW-0805">Transcription regulation</keyword>
<accession>Q62814</accession>
<protein>
    <recommendedName>
        <fullName>Transcription factor E2F5</fullName>
        <shortName>E2F-5</shortName>
    </recommendedName>
</protein>
<evidence type="ECO:0000250" key="1"/>
<evidence type="ECO:0000250" key="2">
    <source>
        <dbReference type="UniProtKB" id="Q6DE14"/>
    </source>
</evidence>
<evidence type="ECO:0000255" key="3"/>
<evidence type="ECO:0000256" key="4">
    <source>
        <dbReference type="SAM" id="MobiDB-lite"/>
    </source>
</evidence>
<evidence type="ECO:0000305" key="5"/>
<organism>
    <name type="scientific">Rattus norvegicus</name>
    <name type="common">Rat</name>
    <dbReference type="NCBI Taxonomy" id="10116"/>
    <lineage>
        <taxon>Eukaryota</taxon>
        <taxon>Metazoa</taxon>
        <taxon>Chordata</taxon>
        <taxon>Craniata</taxon>
        <taxon>Vertebrata</taxon>
        <taxon>Euteleostomi</taxon>
        <taxon>Mammalia</taxon>
        <taxon>Eutheria</taxon>
        <taxon>Euarchontoglires</taxon>
        <taxon>Glires</taxon>
        <taxon>Rodentia</taxon>
        <taxon>Myomorpha</taxon>
        <taxon>Muroidea</taxon>
        <taxon>Muridae</taxon>
        <taxon>Murinae</taxon>
        <taxon>Rattus</taxon>
    </lineage>
</organism>
<sequence length="300" mass="33224">GGSSRHEKSLGLLTTKFVSLLQEAQDGVLDLKAAADTLAVRQKRRIYDITNVLEGIDLIEKKSKNSIQWKGVGAGCNTKEVIDRLRCLKAEIEDLELKERELDQQKLWLQQSIKNVMEDSINNRFSYVTHEDICSCFNGDTLLAIQAPSGTQLEVPIPEMGQNGQKKYQINLKSHSGPIHVLLINKESNSSKPVVFPVPPPDDLTQPSSQSSTSVTPPKSTMAAQNLPEQHVSERSQNFQQTPATEISSGSISGDIIDELMSSDVFPLLRLSPTPADDYNFNLDDNEGVCDLFDVQILNY</sequence>
<gene>
    <name type="primary">E2f5</name>
</gene>
<reference key="1">
    <citation type="journal article" date="1995" name="Cell. Mol. Biol. Res.">
        <title>Structural characterization and specificity of expression of E2F-5: a new member of the E2F family of transcription factors.</title>
        <authorList>
            <person name="Itoh A."/>
            <person name="Levinson S.F."/>
            <person name="Morita T."/>
            <person name="Kourembanas S."/>
            <person name="Brody J.S."/>
            <person name="Mitsialis S.A."/>
        </authorList>
    </citation>
    <scope>NUCLEOTIDE SEQUENCE [MRNA]</scope>
    <source>
        <strain>Sprague-Dawley</strain>
        <tissue>Lung</tissue>
    </source>
</reference>
<dbReference type="EMBL" id="U31668">
    <property type="protein sequence ID" value="AAB00180.1"/>
    <property type="molecule type" value="mRNA"/>
</dbReference>
<dbReference type="SMR" id="Q62814"/>
<dbReference type="FunCoup" id="Q62814">
    <property type="interactions" value="2445"/>
</dbReference>
<dbReference type="STRING" id="10116.ENSRNOP00000044464"/>
<dbReference type="GlyGen" id="Q62814">
    <property type="glycosylation" value="1 site"/>
</dbReference>
<dbReference type="PaxDb" id="10116-ENSRNOP00000044464"/>
<dbReference type="UCSC" id="RGD:621357">
    <property type="organism name" value="rat"/>
</dbReference>
<dbReference type="AGR" id="RGD:621357"/>
<dbReference type="RGD" id="621357">
    <property type="gene designation" value="E2f5"/>
</dbReference>
<dbReference type="eggNOG" id="KOG2577">
    <property type="taxonomic scope" value="Eukaryota"/>
</dbReference>
<dbReference type="InParanoid" id="Q62814"/>
<dbReference type="PhylomeDB" id="Q62814"/>
<dbReference type="Reactome" id="R-RNO-1538133">
    <property type="pathway name" value="G0 and Early G1"/>
</dbReference>
<dbReference type="Reactome" id="R-RNO-2173796">
    <property type="pathway name" value="SMAD2/SMAD3:SMAD4 heterotrimer regulates transcription"/>
</dbReference>
<dbReference type="Reactome" id="R-RNO-69231">
    <property type="pathway name" value="Cyclin D associated events in G1"/>
</dbReference>
<dbReference type="Proteomes" id="UP000002494">
    <property type="component" value="Unplaced"/>
</dbReference>
<dbReference type="GO" id="GO:0005737">
    <property type="term" value="C:cytoplasm"/>
    <property type="evidence" value="ECO:0000266"/>
    <property type="project" value="RGD"/>
</dbReference>
<dbReference type="GO" id="GO:0005634">
    <property type="term" value="C:nucleus"/>
    <property type="evidence" value="ECO:0000266"/>
    <property type="project" value="RGD"/>
</dbReference>
<dbReference type="GO" id="GO:0090575">
    <property type="term" value="C:RNA polymerase II transcription regulator complex"/>
    <property type="evidence" value="ECO:0000318"/>
    <property type="project" value="GO_Central"/>
</dbReference>
<dbReference type="GO" id="GO:0016528">
    <property type="term" value="C:sarcoplasm"/>
    <property type="evidence" value="ECO:0000314"/>
    <property type="project" value="RGD"/>
</dbReference>
<dbReference type="GO" id="GO:0001216">
    <property type="term" value="F:DNA-binding transcription activator activity"/>
    <property type="evidence" value="ECO:0000266"/>
    <property type="project" value="RGD"/>
</dbReference>
<dbReference type="GO" id="GO:0003700">
    <property type="term" value="F:DNA-binding transcription factor activity"/>
    <property type="evidence" value="ECO:0000266"/>
    <property type="project" value="RGD"/>
</dbReference>
<dbReference type="GO" id="GO:0000981">
    <property type="term" value="F:DNA-binding transcription factor activity, RNA polymerase II-specific"/>
    <property type="evidence" value="ECO:0000318"/>
    <property type="project" value="GO_Central"/>
</dbReference>
<dbReference type="GO" id="GO:0046983">
    <property type="term" value="F:protein dimerization activity"/>
    <property type="evidence" value="ECO:0007669"/>
    <property type="project" value="InterPro"/>
</dbReference>
<dbReference type="GO" id="GO:0000978">
    <property type="term" value="F:RNA polymerase II cis-regulatory region sequence-specific DNA binding"/>
    <property type="evidence" value="ECO:0000318"/>
    <property type="project" value="GO_Central"/>
</dbReference>
<dbReference type="GO" id="GO:0043565">
    <property type="term" value="F:sequence-specific DNA binding"/>
    <property type="evidence" value="ECO:0000314"/>
    <property type="project" value="RGD"/>
</dbReference>
<dbReference type="GO" id="GO:0009887">
    <property type="term" value="P:animal organ morphogenesis"/>
    <property type="evidence" value="ECO:0000266"/>
    <property type="project" value="RGD"/>
</dbReference>
<dbReference type="GO" id="GO:0030030">
    <property type="term" value="P:cell projection organization"/>
    <property type="evidence" value="ECO:0007669"/>
    <property type="project" value="UniProtKB-KW"/>
</dbReference>
<dbReference type="GO" id="GO:0006355">
    <property type="term" value="P:regulation of DNA-templated transcription"/>
    <property type="evidence" value="ECO:0000266"/>
    <property type="project" value="RGD"/>
</dbReference>
<dbReference type="GO" id="GO:0006357">
    <property type="term" value="P:regulation of transcription by RNA polymerase II"/>
    <property type="evidence" value="ECO:0000318"/>
    <property type="project" value="GO_Central"/>
</dbReference>
<dbReference type="CDD" id="cd14660">
    <property type="entry name" value="E2F_DD"/>
    <property type="match status" value="1"/>
</dbReference>
<dbReference type="FunFam" id="1.10.10.10:FF:000008">
    <property type="entry name" value="E2F transcription factor 1"/>
    <property type="match status" value="1"/>
</dbReference>
<dbReference type="Gene3D" id="6.10.250.540">
    <property type="match status" value="1"/>
</dbReference>
<dbReference type="Gene3D" id="1.10.10.10">
    <property type="entry name" value="Winged helix-like DNA-binding domain superfamily/Winged helix DNA-binding domain"/>
    <property type="match status" value="1"/>
</dbReference>
<dbReference type="InterPro" id="IPR015633">
    <property type="entry name" value="E2F"/>
</dbReference>
<dbReference type="InterPro" id="IPR037241">
    <property type="entry name" value="E2F-DP_heterodim"/>
</dbReference>
<dbReference type="InterPro" id="IPR032198">
    <property type="entry name" value="E2F_CC-MB"/>
</dbReference>
<dbReference type="InterPro" id="IPR003316">
    <property type="entry name" value="E2F_WHTH_DNA-bd_dom"/>
</dbReference>
<dbReference type="InterPro" id="IPR036388">
    <property type="entry name" value="WH-like_DNA-bd_sf"/>
</dbReference>
<dbReference type="InterPro" id="IPR036390">
    <property type="entry name" value="WH_DNA-bd_sf"/>
</dbReference>
<dbReference type="PANTHER" id="PTHR12081">
    <property type="entry name" value="TRANSCRIPTION FACTOR E2F"/>
    <property type="match status" value="1"/>
</dbReference>
<dbReference type="PANTHER" id="PTHR12081:SF35">
    <property type="entry name" value="TRANSCRIPTION FACTOR E2F5"/>
    <property type="match status" value="1"/>
</dbReference>
<dbReference type="Pfam" id="PF16421">
    <property type="entry name" value="E2F_CC-MB"/>
    <property type="match status" value="1"/>
</dbReference>
<dbReference type="Pfam" id="PF02319">
    <property type="entry name" value="E2F_TDP"/>
    <property type="match status" value="1"/>
</dbReference>
<dbReference type="SMART" id="SM01372">
    <property type="entry name" value="E2F_TDP"/>
    <property type="match status" value="1"/>
</dbReference>
<dbReference type="SUPFAM" id="SSF144074">
    <property type="entry name" value="E2F-DP heterodimerization region"/>
    <property type="match status" value="1"/>
</dbReference>
<dbReference type="SUPFAM" id="SSF46785">
    <property type="entry name" value="Winged helix' DNA-binding domain"/>
    <property type="match status" value="1"/>
</dbReference>
<name>E2F5_RAT</name>
<comment type="function">
    <text evidence="2">Transcriptional activator that binds to E2F sites, these sites are present in the promoter of many genes whose products are involved in cell proliferation. May mediate growth factor-initiated signal transduction. It is likely involved in the early responses of resting cells to growth factor stimulation. Specifically required for multiciliate cell differentiation: together with MCIDAS and E2F5, binds and activate genes required for centriole biogenesis.</text>
</comment>
<comment type="subunit">
    <text evidence="1">Component of the DRTF1/E2F transcription factor complex. Binds cooperatively with DP-1 to E2F sites. Interaction with retinoblastoma protein RB1 or proteins RBL1 and RBL2 inhibits the E2F transactivation domain. Component of the DREAM complex (also named LINC complex) at least composed of E2F4, E2F5, LIN9, LIN37, LIN52, LIN54, MYBL1, MYBL2, RBL1, RBL2, RBBP4, TFDP1 and TFDP2. The complex exists in quiescent cells where it represses cell cycle-dependent genes. It dissociates in S phase when LIN9, LIN37, LIN52 and LIN54 form a subcomplex that binds to MYBL2 (By similarity).</text>
</comment>
<comment type="subcellular location">
    <subcellularLocation>
        <location>Nucleus</location>
    </subcellularLocation>
</comment>
<comment type="tissue specificity">
    <text>Found in placenta followed by kidney, lung and brain.</text>
</comment>
<comment type="similarity">
    <text evidence="5">Belongs to the E2F/DP family.</text>
</comment>